<keyword id="KW-1185">Reference proteome</keyword>
<keyword id="KW-0687">Ribonucleoprotein</keyword>
<keyword id="KW-0689">Ribosomal protein</keyword>
<keyword id="KW-0694">RNA-binding</keyword>
<keyword id="KW-0699">rRNA-binding</keyword>
<dbReference type="EMBL" id="CP000249">
    <property type="protein sequence ID" value="ABD09967.1"/>
    <property type="molecule type" value="Genomic_DNA"/>
</dbReference>
<dbReference type="RefSeq" id="WP_011435040.1">
    <property type="nucleotide sequence ID" value="NZ_MSEA01000426.1"/>
</dbReference>
<dbReference type="SMR" id="Q2JFH5"/>
<dbReference type="STRING" id="106370.Francci3_0583"/>
<dbReference type="KEGG" id="fra:Francci3_0583"/>
<dbReference type="eggNOG" id="COG0088">
    <property type="taxonomic scope" value="Bacteria"/>
</dbReference>
<dbReference type="HOGENOM" id="CLU_041575_5_0_11"/>
<dbReference type="OrthoDB" id="9803201at2"/>
<dbReference type="PhylomeDB" id="Q2JFH5"/>
<dbReference type="Proteomes" id="UP000001937">
    <property type="component" value="Chromosome"/>
</dbReference>
<dbReference type="GO" id="GO:1990904">
    <property type="term" value="C:ribonucleoprotein complex"/>
    <property type="evidence" value="ECO:0007669"/>
    <property type="project" value="UniProtKB-KW"/>
</dbReference>
<dbReference type="GO" id="GO:0005840">
    <property type="term" value="C:ribosome"/>
    <property type="evidence" value="ECO:0007669"/>
    <property type="project" value="UniProtKB-KW"/>
</dbReference>
<dbReference type="GO" id="GO:0019843">
    <property type="term" value="F:rRNA binding"/>
    <property type="evidence" value="ECO:0007669"/>
    <property type="project" value="UniProtKB-UniRule"/>
</dbReference>
<dbReference type="GO" id="GO:0003735">
    <property type="term" value="F:structural constituent of ribosome"/>
    <property type="evidence" value="ECO:0007669"/>
    <property type="project" value="InterPro"/>
</dbReference>
<dbReference type="GO" id="GO:0006412">
    <property type="term" value="P:translation"/>
    <property type="evidence" value="ECO:0007669"/>
    <property type="project" value="UniProtKB-UniRule"/>
</dbReference>
<dbReference type="FunFam" id="3.40.1370.10:FF:000004">
    <property type="entry name" value="50S ribosomal protein L4"/>
    <property type="match status" value="1"/>
</dbReference>
<dbReference type="Gene3D" id="3.40.1370.10">
    <property type="match status" value="1"/>
</dbReference>
<dbReference type="HAMAP" id="MF_01328_B">
    <property type="entry name" value="Ribosomal_uL4_B"/>
    <property type="match status" value="1"/>
</dbReference>
<dbReference type="InterPro" id="IPR002136">
    <property type="entry name" value="Ribosomal_uL4"/>
</dbReference>
<dbReference type="InterPro" id="IPR013005">
    <property type="entry name" value="Ribosomal_uL4-like"/>
</dbReference>
<dbReference type="InterPro" id="IPR023574">
    <property type="entry name" value="Ribosomal_uL4_dom_sf"/>
</dbReference>
<dbReference type="NCBIfam" id="TIGR03953">
    <property type="entry name" value="rplD_bact"/>
    <property type="match status" value="1"/>
</dbReference>
<dbReference type="PANTHER" id="PTHR10746">
    <property type="entry name" value="50S RIBOSOMAL PROTEIN L4"/>
    <property type="match status" value="1"/>
</dbReference>
<dbReference type="PANTHER" id="PTHR10746:SF6">
    <property type="entry name" value="LARGE RIBOSOMAL SUBUNIT PROTEIN UL4M"/>
    <property type="match status" value="1"/>
</dbReference>
<dbReference type="Pfam" id="PF00573">
    <property type="entry name" value="Ribosomal_L4"/>
    <property type="match status" value="1"/>
</dbReference>
<dbReference type="SUPFAM" id="SSF52166">
    <property type="entry name" value="Ribosomal protein L4"/>
    <property type="match status" value="1"/>
</dbReference>
<comment type="function">
    <text evidence="1">One of the primary rRNA binding proteins, this protein initially binds near the 5'-end of the 23S rRNA. It is important during the early stages of 50S assembly. It makes multiple contacts with different domains of the 23S rRNA in the assembled 50S subunit and ribosome.</text>
</comment>
<comment type="function">
    <text evidence="1">Forms part of the polypeptide exit tunnel.</text>
</comment>
<comment type="subunit">
    <text evidence="1">Part of the 50S ribosomal subunit.</text>
</comment>
<comment type="similarity">
    <text evidence="1">Belongs to the universal ribosomal protein uL4 family.</text>
</comment>
<accession>Q2JFH5</accession>
<proteinExistence type="inferred from homology"/>
<protein>
    <recommendedName>
        <fullName evidence="1">Large ribosomal subunit protein uL4</fullName>
    </recommendedName>
    <alternativeName>
        <fullName evidence="3">50S ribosomal protein L4</fullName>
    </alternativeName>
</protein>
<sequence>MSRVATSDPSVTARTVAVHAPNGGEGGSVELPGGVFDVPLNIPLIHQVVVAQLAAARQGTHDTKTRGEVRGGGRKPYRQKGTGRARQGSLRAPQFTGGGTVHGPTPRRYDQRTPKKMKAAALRGALSDRARNNRVHVVSSLVSGETPSTKSAVTALRTIADTRRVLVVASRSDELTWKSLRNVAAVHLLDPGQLNTYDVLVSDDVVFIEDALAAFLARDTRPATSTAGTEAAAGTEGVAGAEENK</sequence>
<gene>
    <name evidence="1" type="primary">rplD</name>
    <name type="ordered locus">Francci3_0583</name>
</gene>
<evidence type="ECO:0000255" key="1">
    <source>
        <dbReference type="HAMAP-Rule" id="MF_01328"/>
    </source>
</evidence>
<evidence type="ECO:0000256" key="2">
    <source>
        <dbReference type="SAM" id="MobiDB-lite"/>
    </source>
</evidence>
<evidence type="ECO:0000305" key="3"/>
<reference key="1">
    <citation type="journal article" date="2007" name="Genome Res.">
        <title>Genome characteristics of facultatively symbiotic Frankia sp. strains reflect host range and host plant biogeography.</title>
        <authorList>
            <person name="Normand P."/>
            <person name="Lapierre P."/>
            <person name="Tisa L.S."/>
            <person name="Gogarten J.P."/>
            <person name="Alloisio N."/>
            <person name="Bagnarol E."/>
            <person name="Bassi C.A."/>
            <person name="Berry A.M."/>
            <person name="Bickhart D.M."/>
            <person name="Choisne N."/>
            <person name="Couloux A."/>
            <person name="Cournoyer B."/>
            <person name="Cruveiller S."/>
            <person name="Daubin V."/>
            <person name="Demange N."/>
            <person name="Francino M.P."/>
            <person name="Goltsman E."/>
            <person name="Huang Y."/>
            <person name="Kopp O.R."/>
            <person name="Labarre L."/>
            <person name="Lapidus A."/>
            <person name="Lavire C."/>
            <person name="Marechal J."/>
            <person name="Martinez M."/>
            <person name="Mastronunzio J.E."/>
            <person name="Mullin B.C."/>
            <person name="Niemann J."/>
            <person name="Pujic P."/>
            <person name="Rawnsley T."/>
            <person name="Rouy Z."/>
            <person name="Schenowitz C."/>
            <person name="Sellstedt A."/>
            <person name="Tavares F."/>
            <person name="Tomkins J.P."/>
            <person name="Vallenet D."/>
            <person name="Valverde C."/>
            <person name="Wall L.G."/>
            <person name="Wang Y."/>
            <person name="Medigue C."/>
            <person name="Benson D.R."/>
        </authorList>
    </citation>
    <scope>NUCLEOTIDE SEQUENCE [LARGE SCALE GENOMIC DNA]</scope>
    <source>
        <strain>DSM 45818 / CECT 9043 / HFP020203 / CcI3</strain>
    </source>
</reference>
<name>RL4_FRACC</name>
<feature type="chain" id="PRO_0000242377" description="Large ribosomal subunit protein uL4">
    <location>
        <begin position="1"/>
        <end position="245"/>
    </location>
</feature>
<feature type="region of interest" description="Disordered" evidence="2">
    <location>
        <begin position="1"/>
        <end position="28"/>
    </location>
</feature>
<feature type="region of interest" description="Disordered" evidence="2">
    <location>
        <begin position="56"/>
        <end position="114"/>
    </location>
</feature>
<feature type="region of interest" description="Disordered" evidence="2">
    <location>
        <begin position="224"/>
        <end position="245"/>
    </location>
</feature>
<feature type="compositionally biased region" description="Polar residues" evidence="2">
    <location>
        <begin position="1"/>
        <end position="13"/>
    </location>
</feature>
<feature type="compositionally biased region" description="Basic and acidic residues" evidence="2">
    <location>
        <begin position="59"/>
        <end position="71"/>
    </location>
</feature>
<feature type="compositionally biased region" description="Basic residues" evidence="2">
    <location>
        <begin position="72"/>
        <end position="83"/>
    </location>
</feature>
<organism>
    <name type="scientific">Frankia casuarinae (strain DSM 45818 / CECT 9043 / HFP020203 / CcI3)</name>
    <dbReference type="NCBI Taxonomy" id="106370"/>
    <lineage>
        <taxon>Bacteria</taxon>
        <taxon>Bacillati</taxon>
        <taxon>Actinomycetota</taxon>
        <taxon>Actinomycetes</taxon>
        <taxon>Frankiales</taxon>
        <taxon>Frankiaceae</taxon>
        <taxon>Frankia</taxon>
    </lineage>
</organism>